<gene>
    <name type="ordered locus">HI_0352</name>
</gene>
<evidence type="ECO:0000305" key="1"/>
<reference key="1">
    <citation type="journal article" date="1991" name="Mol. Microbiol.">
        <title>Molecular analysis of a complex locus from Haemophilus influenzae involved in phase-variable lipopolysaccharide biosynthesis.</title>
        <authorList>
            <person name="Maskell D.J."/>
            <person name="Szabo M.J."/>
            <person name="Butler P.D."/>
            <person name="Williams A.E."/>
            <person name="Moxon E.R."/>
        </authorList>
    </citation>
    <scope>NUCLEOTIDE SEQUENCE [GENOMIC DNA]</scope>
    <source>
        <strain>RM 7004 / Serotype B</strain>
    </source>
</reference>
<reference key="2">
    <citation type="journal article" date="1995" name="Science">
        <title>Whole-genome random sequencing and assembly of Haemophilus influenzae Rd.</title>
        <authorList>
            <person name="Fleischmann R.D."/>
            <person name="Adams M.D."/>
            <person name="White O."/>
            <person name="Clayton R.A."/>
            <person name="Kirkness E.F."/>
            <person name="Kerlavage A.R."/>
            <person name="Bult C.J."/>
            <person name="Tomb J.-F."/>
            <person name="Dougherty B.A."/>
            <person name="Merrick J.M."/>
            <person name="McKenney K."/>
            <person name="Sutton G.G."/>
            <person name="FitzHugh W."/>
            <person name="Fields C.A."/>
            <person name="Gocayne J.D."/>
            <person name="Scott J.D."/>
            <person name="Shirley R."/>
            <person name="Liu L.-I."/>
            <person name="Glodek A."/>
            <person name="Kelley J.M."/>
            <person name="Weidman J.F."/>
            <person name="Phillips C.A."/>
            <person name="Spriggs T."/>
            <person name="Hedblom E."/>
            <person name="Cotton M.D."/>
            <person name="Utterback T.R."/>
            <person name="Hanna M.C."/>
            <person name="Nguyen D.T."/>
            <person name="Saudek D.M."/>
            <person name="Brandon R.C."/>
            <person name="Fine L.D."/>
            <person name="Fritchman J.L."/>
            <person name="Fuhrmann J.L."/>
            <person name="Geoghagen N.S.M."/>
            <person name="Gnehm C.L."/>
            <person name="McDonald L.A."/>
            <person name="Small K.V."/>
            <person name="Fraser C.M."/>
            <person name="Smith H.O."/>
            <person name="Venter J.C."/>
        </authorList>
    </citation>
    <scope>NUCLEOTIDE SEQUENCE [LARGE SCALE GENOMIC DNA]</scope>
    <source>
        <strain>ATCC 51907 / DSM 11121 / KW20 / Rd</strain>
    </source>
</reference>
<proteinExistence type="predicted"/>
<protein>
    <recommendedName>
        <fullName>Uncharacterized protein HI_0352</fullName>
    </recommendedName>
    <alternativeName>
        <fullName>ORF1</fullName>
    </alternativeName>
</protein>
<feature type="chain" id="PRO_0000077915" description="Uncharacterized protein HI_0352">
    <location>
        <begin position="1"/>
        <end position="231"/>
    </location>
</feature>
<feature type="sequence conflict" description="In Ref. 1." evidence="1" ref="1">
    <original>MQLIKNNEYEYADIILSSFVNLGDSEL</original>
    <variation>MNGTICQSINQSINQSINQSINQSINQSINQSINQSKSVIIAGNGTSLKSIDYSLLPKDYDVFRCNQFYFEDHYFLG</variation>
    <location>
        <begin position="1"/>
        <end position="27"/>
    </location>
</feature>
<dbReference type="EMBL" id="X57315">
    <property type="protein sequence ID" value="CAA40567.1"/>
    <property type="molecule type" value="Genomic_DNA"/>
</dbReference>
<dbReference type="EMBL" id="L42023">
    <property type="protein sequence ID" value="AAC22013.1"/>
    <property type="molecule type" value="Genomic_DNA"/>
</dbReference>
<dbReference type="PIR" id="E64149">
    <property type="entry name" value="E64149"/>
</dbReference>
<dbReference type="RefSeq" id="NP_438516.1">
    <property type="nucleotide sequence ID" value="NC_000907.1"/>
</dbReference>
<dbReference type="SMR" id="P24324"/>
<dbReference type="CAZy" id="GT42">
    <property type="family name" value="Glycosyltransferase Family 42"/>
</dbReference>
<dbReference type="EnsemblBacteria" id="AAC22013">
    <property type="protein sequence ID" value="AAC22013"/>
    <property type="gene ID" value="HI_0352"/>
</dbReference>
<dbReference type="KEGG" id="hin:HI_0352"/>
<dbReference type="PATRIC" id="fig|71421.8.peg.371"/>
<dbReference type="eggNOG" id="ENOG5032RU0">
    <property type="taxonomic scope" value="Bacteria"/>
</dbReference>
<dbReference type="HOGENOM" id="CLU_053661_1_0_6"/>
<dbReference type="OrthoDB" id="5677237at2"/>
<dbReference type="BioCyc" id="HINF71421:G1GJ1-368-MONOMER"/>
<dbReference type="Proteomes" id="UP000000579">
    <property type="component" value="Chromosome"/>
</dbReference>
<dbReference type="Gene3D" id="3.90.1480.10">
    <property type="entry name" value="Alpha-2,3-sialyltransferase"/>
    <property type="match status" value="1"/>
</dbReference>
<dbReference type="InterPro" id="IPR009251">
    <property type="entry name" value="A-2_3-sialyltransferase"/>
</dbReference>
<dbReference type="InterPro" id="IPR036715">
    <property type="entry name" value="A-2_3-sialylTrfase_sf"/>
</dbReference>
<dbReference type="Pfam" id="PF06002">
    <property type="entry name" value="CST-I"/>
    <property type="match status" value="1"/>
</dbReference>
<dbReference type="SUPFAM" id="SSF102414">
    <property type="entry name" value="Alpha-2,3/8-sialyltransferase CstII"/>
    <property type="match status" value="1"/>
</dbReference>
<sequence length="231" mass="27279">MQLIKNNEYEYADIILSSFVNLGDSELKKIKNVQKLLTQVDIGHYYLNKLPAFDAYLQYNELYENKRITSGVYMCAVATVMGYKDLYLTGIDFYQEKGNPYAFHHQKENIIKLLPSFSQNKSQSDIHSMEYDLNALYFLQKHYGVNIYCISPESPLCNYFPLSPLNNPITFILEEKKNYTQDILIPPKFVYKKIGIYSKPRIYQNLIFRLIWDILRLPNDIKHALKSRKWD</sequence>
<keyword id="KW-1185">Reference proteome</keyword>
<name>Y352_HAEIN</name>
<accession>P24324</accession>
<organism>
    <name type="scientific">Haemophilus influenzae (strain ATCC 51907 / DSM 11121 / KW20 / Rd)</name>
    <dbReference type="NCBI Taxonomy" id="71421"/>
    <lineage>
        <taxon>Bacteria</taxon>
        <taxon>Pseudomonadati</taxon>
        <taxon>Pseudomonadota</taxon>
        <taxon>Gammaproteobacteria</taxon>
        <taxon>Pasteurellales</taxon>
        <taxon>Pasteurellaceae</taxon>
        <taxon>Haemophilus</taxon>
    </lineage>
</organism>